<accession>P44144</accession>
<proteinExistence type="predicted"/>
<sequence length="587" mass="66529">MTEQTFILGKDAALEDSIAKFQQKLTALGFNIEEASWLNPVPNVWSVHIRDKDCPQCFSNGKGASKKAALASALGEYFERLSTNYFFADFYLGQEIANSDFVHYPNEKWFPIEDDALLPNGILDDYLLDYFBPNAELTPELLVDLQSGNYDRGIVAMPYVRQSDEQTVYIPQSIIANLYVSNGMSAGNTKFEARVQGLSEVFERYVKNKIIAEAISLPEIPKSVMDRYPSIQASIAKLEEEGFPIYAFDASLGGKYPVICVVLLNPNNGTCFSSFGAHPNFQVALERTVTELLQGRSLKDLDVFSPPSFNNDDVAEHANLETHFIDSSGLISWDLLKETPDYEFADWDFSGTTQEEYNNLMAIFRADEKEVYVMDYNHLDVYACRIIVPGMSDIYPADDLIYANNNMGMDWREILLDLPNWHHDAETYQELLEELDGQDIDDATRVREFIGIVAPKNSGWTTLRVGELKSMLHLALGELEQALDWANWTLNMNSSVFTTEPVNYYRTLISIIELHLDQNRDPAQYRAVFEKMYGKDAVKQAWAAVSEGGNPFYNLPASDENLKNFKEHQALLGAYGKLQKAKKENWK</sequence>
<dbReference type="EMBL" id="L42023">
    <property type="protein sequence ID" value="AAC22918.2"/>
    <property type="molecule type" value="Genomic_DNA"/>
</dbReference>
<dbReference type="PIR" id="I64023">
    <property type="entry name" value="I64023"/>
</dbReference>
<dbReference type="RefSeq" id="NP_439420.1">
    <property type="nucleotide sequence ID" value="NC_000907.1"/>
</dbReference>
<dbReference type="STRING" id="71421.HI_1265"/>
<dbReference type="EnsemblBacteria" id="AAC22918">
    <property type="protein sequence ID" value="AAC22918"/>
    <property type="gene ID" value="HI_1265"/>
</dbReference>
<dbReference type="KEGG" id="hin:HI_1265"/>
<dbReference type="PATRIC" id="fig|71421.8.peg.1317"/>
<dbReference type="eggNOG" id="COG1944">
    <property type="taxonomic scope" value="Bacteria"/>
</dbReference>
<dbReference type="HOGENOM" id="CLU_022530_1_0_6"/>
<dbReference type="OrthoDB" id="9761274at2"/>
<dbReference type="PhylomeDB" id="P44144"/>
<dbReference type="BioCyc" id="HINF71421:G1GJ1-1293-MONOMER"/>
<dbReference type="Proteomes" id="UP000000579">
    <property type="component" value="Chromosome"/>
</dbReference>
<dbReference type="Gene3D" id="3.30.1330.230">
    <property type="match status" value="1"/>
</dbReference>
<dbReference type="InterPro" id="IPR003776">
    <property type="entry name" value="YcaO-like_dom"/>
</dbReference>
<dbReference type="InterPro" id="IPR041080">
    <property type="entry name" value="YcaO_C"/>
</dbReference>
<dbReference type="NCBIfam" id="TIGR00702">
    <property type="entry name" value="YcaO-type kinase domain"/>
    <property type="match status" value="1"/>
</dbReference>
<dbReference type="NCBIfam" id="NF040716">
    <property type="entry name" value="YcaO_for_S12"/>
    <property type="match status" value="1"/>
</dbReference>
<dbReference type="PANTHER" id="PTHR37809">
    <property type="entry name" value="RIBOSOMAL PROTEIN S12 METHYLTHIOTRANSFERASE ACCESSORY FACTOR YCAO"/>
    <property type="match status" value="1"/>
</dbReference>
<dbReference type="PANTHER" id="PTHR37809:SF1">
    <property type="entry name" value="RIBOSOMAL PROTEIN S12 METHYLTHIOTRANSFERASE ACCESSORY FACTOR YCAO"/>
    <property type="match status" value="1"/>
</dbReference>
<dbReference type="Pfam" id="PF02624">
    <property type="entry name" value="YcaO"/>
    <property type="match status" value="1"/>
</dbReference>
<dbReference type="Pfam" id="PF18381">
    <property type="entry name" value="YcaO_C"/>
    <property type="match status" value="1"/>
</dbReference>
<dbReference type="PROSITE" id="PS51664">
    <property type="entry name" value="YCAO"/>
    <property type="match status" value="1"/>
</dbReference>
<feature type="chain" id="PRO_0000144977" description="Uncharacterized protein HI_1265">
    <location>
        <begin position="1"/>
        <end position="587"/>
    </location>
</feature>
<feature type="domain" description="YcaO" evidence="1">
    <location>
        <begin position="61"/>
        <end position="426"/>
    </location>
</feature>
<gene>
    <name type="ordered locus">HI_1265</name>
</gene>
<name>Y1265_HAEIN</name>
<evidence type="ECO:0000255" key="1">
    <source>
        <dbReference type="PROSITE-ProRule" id="PRU00999"/>
    </source>
</evidence>
<reference key="1">
    <citation type="journal article" date="1995" name="Science">
        <title>Whole-genome random sequencing and assembly of Haemophilus influenzae Rd.</title>
        <authorList>
            <person name="Fleischmann R.D."/>
            <person name="Adams M.D."/>
            <person name="White O."/>
            <person name="Clayton R.A."/>
            <person name="Kirkness E.F."/>
            <person name="Kerlavage A.R."/>
            <person name="Bult C.J."/>
            <person name="Tomb J.-F."/>
            <person name="Dougherty B.A."/>
            <person name="Merrick J.M."/>
            <person name="McKenney K."/>
            <person name="Sutton G.G."/>
            <person name="FitzHugh W."/>
            <person name="Fields C.A."/>
            <person name="Gocayne J.D."/>
            <person name="Scott J.D."/>
            <person name="Shirley R."/>
            <person name="Liu L.-I."/>
            <person name="Glodek A."/>
            <person name="Kelley J.M."/>
            <person name="Weidman J.F."/>
            <person name="Phillips C.A."/>
            <person name="Spriggs T."/>
            <person name="Hedblom E."/>
            <person name="Cotton M.D."/>
            <person name="Utterback T.R."/>
            <person name="Hanna M.C."/>
            <person name="Nguyen D.T."/>
            <person name="Saudek D.M."/>
            <person name="Brandon R.C."/>
            <person name="Fine L.D."/>
            <person name="Fritchman J.L."/>
            <person name="Fuhrmann J.L."/>
            <person name="Geoghagen N.S.M."/>
            <person name="Gnehm C.L."/>
            <person name="McDonald L.A."/>
            <person name="Small K.V."/>
            <person name="Fraser C.M."/>
            <person name="Smith H.O."/>
            <person name="Venter J.C."/>
        </authorList>
    </citation>
    <scope>NUCLEOTIDE SEQUENCE [LARGE SCALE GENOMIC DNA]</scope>
    <source>
        <strain>ATCC 51907 / DSM 11121 / KW20 / Rd</strain>
    </source>
</reference>
<protein>
    <recommendedName>
        <fullName>Uncharacterized protein HI_1265</fullName>
    </recommendedName>
</protein>
<organism>
    <name type="scientific">Haemophilus influenzae (strain ATCC 51907 / DSM 11121 / KW20 / Rd)</name>
    <dbReference type="NCBI Taxonomy" id="71421"/>
    <lineage>
        <taxon>Bacteria</taxon>
        <taxon>Pseudomonadati</taxon>
        <taxon>Pseudomonadota</taxon>
        <taxon>Gammaproteobacteria</taxon>
        <taxon>Pasteurellales</taxon>
        <taxon>Pasteurellaceae</taxon>
        <taxon>Haemophilus</taxon>
    </lineage>
</organism>
<keyword id="KW-1185">Reference proteome</keyword>